<name>RIPP1_DANRE</name>
<protein>
    <recommendedName>
        <fullName>Protein ripply1</fullName>
    </recommendedName>
</protein>
<dbReference type="EMBL" id="AB212219">
    <property type="protein sequence ID" value="BAE53716.1"/>
    <property type="molecule type" value="mRNA"/>
</dbReference>
<dbReference type="RefSeq" id="NP_001034197.1">
    <property type="nucleotide sequence ID" value="NM_001039108.1"/>
</dbReference>
<dbReference type="FunCoup" id="Q2WG80">
    <property type="interactions" value="513"/>
</dbReference>
<dbReference type="STRING" id="7955.ENSDARP00000154427"/>
<dbReference type="PaxDb" id="7955-ENSDARP00000122894"/>
<dbReference type="ABCD" id="Q2WG80">
    <property type="antibodies" value="6 sequenced antibodies"/>
</dbReference>
<dbReference type="GeneID" id="654446"/>
<dbReference type="KEGG" id="dre:654446"/>
<dbReference type="AGR" id="ZFIN:ZDB-GENE-060113-1"/>
<dbReference type="CTD" id="92129"/>
<dbReference type="ZFIN" id="ZDB-GENE-060113-1">
    <property type="gene designation" value="ripply1"/>
</dbReference>
<dbReference type="eggNOG" id="ENOG502S6U6">
    <property type="taxonomic scope" value="Eukaryota"/>
</dbReference>
<dbReference type="InParanoid" id="Q2WG80"/>
<dbReference type="OrthoDB" id="5978888at2759"/>
<dbReference type="PhylomeDB" id="Q2WG80"/>
<dbReference type="PRO" id="PR:Q2WG80"/>
<dbReference type="Proteomes" id="UP000000437">
    <property type="component" value="Chromosome 21"/>
</dbReference>
<dbReference type="GO" id="GO:0005634">
    <property type="term" value="C:nucleus"/>
    <property type="evidence" value="ECO:0000314"/>
    <property type="project" value="ZFIN"/>
</dbReference>
<dbReference type="GO" id="GO:0009880">
    <property type="term" value="P:embryonic pattern specification"/>
    <property type="evidence" value="ECO:0000315"/>
    <property type="project" value="ZFIN"/>
</dbReference>
<dbReference type="GO" id="GO:0045892">
    <property type="term" value="P:negative regulation of DNA-templated transcription"/>
    <property type="evidence" value="ECO:0000315"/>
    <property type="project" value="UniProtKB"/>
</dbReference>
<dbReference type="GO" id="GO:0000122">
    <property type="term" value="P:negative regulation of transcription by RNA polymerase II"/>
    <property type="evidence" value="ECO:0000318"/>
    <property type="project" value="GO_Central"/>
</dbReference>
<dbReference type="GO" id="GO:0048641">
    <property type="term" value="P:regulation of skeletal muscle tissue development"/>
    <property type="evidence" value="ECO:0000315"/>
    <property type="project" value="ZFIN"/>
</dbReference>
<dbReference type="GO" id="GO:0061053">
    <property type="term" value="P:somite development"/>
    <property type="evidence" value="ECO:0000315"/>
    <property type="project" value="ZFIN"/>
</dbReference>
<dbReference type="GO" id="GO:0032525">
    <property type="term" value="P:somite rostral/caudal axis specification"/>
    <property type="evidence" value="ECO:0000315"/>
    <property type="project" value="UniProtKB"/>
</dbReference>
<dbReference type="GO" id="GO:0001757">
    <property type="term" value="P:somite specification"/>
    <property type="evidence" value="ECO:0000315"/>
    <property type="project" value="ZFIN"/>
</dbReference>
<dbReference type="GO" id="GO:0001756">
    <property type="term" value="P:somitogenesis"/>
    <property type="evidence" value="ECO:0000316"/>
    <property type="project" value="ZFIN"/>
</dbReference>
<dbReference type="InterPro" id="IPR028127">
    <property type="entry name" value="Ripply_fam"/>
</dbReference>
<dbReference type="PANTHER" id="PTHR16770">
    <property type="entry name" value="PROTEIN RIPPLY-LIKE"/>
    <property type="match status" value="1"/>
</dbReference>
<dbReference type="PANTHER" id="PTHR16770:SF3">
    <property type="entry name" value="PROTEIN RIPPLY2"/>
    <property type="match status" value="1"/>
</dbReference>
<dbReference type="Pfam" id="PF14998">
    <property type="entry name" value="Ripply"/>
    <property type="match status" value="1"/>
</dbReference>
<organism>
    <name type="scientific">Danio rerio</name>
    <name type="common">Zebrafish</name>
    <name type="synonym">Brachydanio rerio</name>
    <dbReference type="NCBI Taxonomy" id="7955"/>
    <lineage>
        <taxon>Eukaryota</taxon>
        <taxon>Metazoa</taxon>
        <taxon>Chordata</taxon>
        <taxon>Craniata</taxon>
        <taxon>Vertebrata</taxon>
        <taxon>Euteleostomi</taxon>
        <taxon>Actinopterygii</taxon>
        <taxon>Neopterygii</taxon>
        <taxon>Teleostei</taxon>
        <taxon>Ostariophysi</taxon>
        <taxon>Cypriniformes</taxon>
        <taxon>Danionidae</taxon>
        <taxon>Danioninae</taxon>
        <taxon>Danio</taxon>
    </lineage>
</organism>
<gene>
    <name evidence="7" type="primary">ripply1</name>
</gene>
<feature type="chain" id="PRO_0000307758" description="Protein ripply1">
    <location>
        <begin position="1"/>
        <end position="140"/>
    </location>
</feature>
<feature type="region of interest" description="Ripply homology domain" evidence="2">
    <location>
        <begin position="71"/>
        <end position="106"/>
    </location>
</feature>
<feature type="region of interest" description="Disordered" evidence="3">
    <location>
        <begin position="107"/>
        <end position="126"/>
    </location>
</feature>
<feature type="short sequence motif" description="WRPW motif; required for gro2-binding" evidence="4">
    <location>
        <begin position="28"/>
        <end position="31"/>
    </location>
</feature>
<feature type="mutagenesis site" description="Disrupts gro2-binding." evidence="4">
    <location>
        <begin position="28"/>
        <end position="31"/>
    </location>
</feature>
<reference evidence="5 6" key="1">
    <citation type="journal article" date="2005" name="Dev. Cell">
        <title>Groucho-associated transcriptional repressor ripply1 is required for proper transition from the presomitic mesoderm to somites.</title>
        <authorList>
            <person name="Kawamura A."/>
            <person name="Koshida S."/>
            <person name="Hijikata H."/>
            <person name="Ohbayashi A."/>
            <person name="Kondoh H."/>
            <person name="Takada S."/>
        </authorList>
    </citation>
    <scope>NUCLEOTIDE SEQUENCE [MRNA]</scope>
    <scope>FUNCTION</scope>
    <scope>INTERACTION WITH GRO2</scope>
    <scope>SUBCELLULAR LOCATION</scope>
    <scope>TISSUE SPECIFICITY</scope>
    <scope>DOMAIN</scope>
    <scope>MUTAGENESIS OF 28-TRP--TRP-31</scope>
    <source>
        <tissue evidence="4">Embryo</tissue>
    </source>
</reference>
<evidence type="ECO:0000250" key="1"/>
<evidence type="ECO:0000255" key="2"/>
<evidence type="ECO:0000256" key="3">
    <source>
        <dbReference type="SAM" id="MobiDB-lite"/>
    </source>
</evidence>
<evidence type="ECO:0000269" key="4">
    <source>
    </source>
</evidence>
<evidence type="ECO:0000305" key="5"/>
<evidence type="ECO:0000312" key="6">
    <source>
        <dbReference type="EMBL" id="BAE53716.1"/>
    </source>
</evidence>
<evidence type="ECO:0000312" key="7">
    <source>
        <dbReference type="ZFIN" id="ZDB-GENE-060113-1"/>
    </source>
</evidence>
<comment type="function">
    <text evidence="4">Plays a role in somitogenesis. Essential for transcriptional repression of the segmental patterning genes, thus terminating the segmentation program in the presomitic mesoderm, and also required for the maintenance of rostrocaudal polarity in somites.</text>
</comment>
<comment type="subunit">
    <text evidence="4">Interacts with gro2 via the WRPW motif.</text>
</comment>
<comment type="subcellular location">
    <subcellularLocation>
        <location evidence="4">Nucleus</location>
    </subcellularLocation>
</comment>
<comment type="tissue specificity">
    <text evidence="4">Expressed in the embryonic anterior presomitic mesoderm and in newly formed somites.</text>
</comment>
<comment type="domain">
    <text evidence="1">The ripply homology domain is required for transcriptional repression.</text>
</comment>
<comment type="domain">
    <text evidence="4">The WRPW motif is required for binding to tle/groucho proteins.</text>
</comment>
<comment type="miscellaneous">
    <text evidence="4">Named after the expression pattern, which decreases in a posterior to anterior direction in somites like a ripple.</text>
</comment>
<comment type="similarity">
    <text evidence="5">Belongs to the ripply family.</text>
</comment>
<proteinExistence type="evidence at protein level"/>
<sequence>MNSVCFATPHTKHMDSKMQLTSSPASLWRPWLVTRKDAQTECRRTKLACPYSRPEVPGNTTTDGKMQSFQHPVRLYWPRSKSFDYLFSDGEALLRNFPVQATINFYDESDSEDEEESCDEDDESDVEDCLKHNSHFTAFN</sequence>
<accession>Q2WG80</accession>
<keyword id="KW-0217">Developmental protein</keyword>
<keyword id="KW-0539">Nucleus</keyword>
<keyword id="KW-1185">Reference proteome</keyword>
<keyword id="KW-0678">Repressor</keyword>
<keyword id="KW-0804">Transcription</keyword>
<keyword id="KW-0805">Transcription regulation</keyword>